<reference key="1">
    <citation type="journal article" date="2009" name="Appl. Environ. Microbiol.">
        <title>Complete genome sequence of the chemolithoautotrophic marine magnetotactic coccus strain MC-1.</title>
        <authorList>
            <person name="Schubbe S."/>
            <person name="Williams T.J."/>
            <person name="Xie G."/>
            <person name="Kiss H.E."/>
            <person name="Brettin T.S."/>
            <person name="Martinez D."/>
            <person name="Ross C.A."/>
            <person name="Schuler D."/>
            <person name="Cox B.L."/>
            <person name="Nealson K.H."/>
            <person name="Bazylinski D.A."/>
        </authorList>
    </citation>
    <scope>NUCLEOTIDE SEQUENCE [LARGE SCALE GENOMIC DNA]</scope>
    <source>
        <strain>ATCC BAA-1437 / JCM 17883 / MC-1</strain>
    </source>
</reference>
<evidence type="ECO:0000255" key="1">
    <source>
        <dbReference type="HAMAP-Rule" id="MF_01006"/>
    </source>
</evidence>
<organism>
    <name type="scientific">Magnetococcus marinus (strain ATCC BAA-1437 / JCM 17883 / MC-1)</name>
    <dbReference type="NCBI Taxonomy" id="156889"/>
    <lineage>
        <taxon>Bacteria</taxon>
        <taxon>Pseudomonadati</taxon>
        <taxon>Pseudomonadota</taxon>
        <taxon>Alphaproteobacteria</taxon>
        <taxon>Magnetococcales</taxon>
        <taxon>Magnetococcaceae</taxon>
        <taxon>Magnetococcus</taxon>
    </lineage>
</organism>
<name>UPPP_MAGMM</name>
<sequence>MDLFNAAILALIQGITEFLPISSSGHLILTPYLLGWQDQGLVFDIAANSGSLAAVMLYFRREVGQMLRGGWRLLCAPRAWRQANAESHLVLQLALATIPVGLVGLACKDWVATVARDPMIIATTSILFGLLLWWADRQGRCNNDGSALSWRQVGIIGIAQAFALIPGTSRSGVTMTAGLMLGLTREAAARFSFLMAIPVGILAALLDLKDLFAHPMQGDELYFLGVGFCVSGLSAYMVIHGLLAWLKRQTMTPFVVYRVVLGVVIFATLG</sequence>
<comment type="function">
    <text evidence="1">Catalyzes the dephosphorylation of undecaprenyl diphosphate (UPP). Confers resistance to bacitracin.</text>
</comment>
<comment type="catalytic activity">
    <reaction evidence="1">
        <text>di-trans,octa-cis-undecaprenyl diphosphate + H2O = di-trans,octa-cis-undecaprenyl phosphate + phosphate + H(+)</text>
        <dbReference type="Rhea" id="RHEA:28094"/>
        <dbReference type="ChEBI" id="CHEBI:15377"/>
        <dbReference type="ChEBI" id="CHEBI:15378"/>
        <dbReference type="ChEBI" id="CHEBI:43474"/>
        <dbReference type="ChEBI" id="CHEBI:58405"/>
        <dbReference type="ChEBI" id="CHEBI:60392"/>
        <dbReference type="EC" id="3.6.1.27"/>
    </reaction>
</comment>
<comment type="subcellular location">
    <subcellularLocation>
        <location evidence="1">Cell inner membrane</location>
        <topology evidence="1">Multi-pass membrane protein</topology>
    </subcellularLocation>
</comment>
<comment type="miscellaneous">
    <text>Bacitracin is thought to be involved in the inhibition of peptidoglycan synthesis by sequestering undecaprenyl diphosphate, thereby reducing the pool of lipid carrier available.</text>
</comment>
<comment type="similarity">
    <text evidence="1">Belongs to the UppP family.</text>
</comment>
<protein>
    <recommendedName>
        <fullName evidence="1">Undecaprenyl-diphosphatase</fullName>
        <ecNumber evidence="1">3.6.1.27</ecNumber>
    </recommendedName>
    <alternativeName>
        <fullName evidence="1">Bacitracin resistance protein</fullName>
    </alternativeName>
    <alternativeName>
        <fullName evidence="1">Undecaprenyl pyrophosphate phosphatase</fullName>
    </alternativeName>
</protein>
<keyword id="KW-0046">Antibiotic resistance</keyword>
<keyword id="KW-0997">Cell inner membrane</keyword>
<keyword id="KW-1003">Cell membrane</keyword>
<keyword id="KW-0133">Cell shape</keyword>
<keyword id="KW-0961">Cell wall biogenesis/degradation</keyword>
<keyword id="KW-0378">Hydrolase</keyword>
<keyword id="KW-0472">Membrane</keyword>
<keyword id="KW-0573">Peptidoglycan synthesis</keyword>
<keyword id="KW-1185">Reference proteome</keyword>
<keyword id="KW-0812">Transmembrane</keyword>
<keyword id="KW-1133">Transmembrane helix</keyword>
<feature type="chain" id="PRO_0000290723" description="Undecaprenyl-diphosphatase">
    <location>
        <begin position="1"/>
        <end position="270"/>
    </location>
</feature>
<feature type="transmembrane region" description="Helical" evidence="1">
    <location>
        <begin position="1"/>
        <end position="21"/>
    </location>
</feature>
<feature type="transmembrane region" description="Helical" evidence="1">
    <location>
        <begin position="39"/>
        <end position="59"/>
    </location>
</feature>
<feature type="transmembrane region" description="Helical" evidence="1">
    <location>
        <begin position="87"/>
        <end position="107"/>
    </location>
</feature>
<feature type="transmembrane region" description="Helical" evidence="1">
    <location>
        <begin position="114"/>
        <end position="134"/>
    </location>
</feature>
<feature type="transmembrane region" description="Helical" evidence="1">
    <location>
        <begin position="147"/>
        <end position="167"/>
    </location>
</feature>
<feature type="transmembrane region" description="Helical" evidence="1">
    <location>
        <begin position="193"/>
        <end position="213"/>
    </location>
</feature>
<feature type="transmembrane region" description="Helical" evidence="1">
    <location>
        <begin position="223"/>
        <end position="243"/>
    </location>
</feature>
<feature type="transmembrane region" description="Helical" evidence="1">
    <location>
        <begin position="250"/>
        <end position="270"/>
    </location>
</feature>
<gene>
    <name evidence="1" type="primary">uppP</name>
    <name type="ordered locus">Mmc1_2096</name>
</gene>
<dbReference type="EC" id="3.6.1.27" evidence="1"/>
<dbReference type="EMBL" id="CP000471">
    <property type="protein sequence ID" value="ABK44597.1"/>
    <property type="molecule type" value="Genomic_DNA"/>
</dbReference>
<dbReference type="RefSeq" id="WP_011713725.1">
    <property type="nucleotide sequence ID" value="NC_008576.1"/>
</dbReference>
<dbReference type="SMR" id="A0L9F4"/>
<dbReference type="STRING" id="156889.Mmc1_2096"/>
<dbReference type="KEGG" id="mgm:Mmc1_2096"/>
<dbReference type="eggNOG" id="COG1968">
    <property type="taxonomic scope" value="Bacteria"/>
</dbReference>
<dbReference type="HOGENOM" id="CLU_060296_1_0_5"/>
<dbReference type="OrthoDB" id="9808289at2"/>
<dbReference type="Proteomes" id="UP000002586">
    <property type="component" value="Chromosome"/>
</dbReference>
<dbReference type="GO" id="GO:0005886">
    <property type="term" value="C:plasma membrane"/>
    <property type="evidence" value="ECO:0007669"/>
    <property type="project" value="UniProtKB-SubCell"/>
</dbReference>
<dbReference type="GO" id="GO:0050380">
    <property type="term" value="F:undecaprenyl-diphosphatase activity"/>
    <property type="evidence" value="ECO:0007669"/>
    <property type="project" value="UniProtKB-UniRule"/>
</dbReference>
<dbReference type="GO" id="GO:0071555">
    <property type="term" value="P:cell wall organization"/>
    <property type="evidence" value="ECO:0007669"/>
    <property type="project" value="UniProtKB-KW"/>
</dbReference>
<dbReference type="GO" id="GO:0009252">
    <property type="term" value="P:peptidoglycan biosynthetic process"/>
    <property type="evidence" value="ECO:0007669"/>
    <property type="project" value="UniProtKB-KW"/>
</dbReference>
<dbReference type="GO" id="GO:0008360">
    <property type="term" value="P:regulation of cell shape"/>
    <property type="evidence" value="ECO:0007669"/>
    <property type="project" value="UniProtKB-KW"/>
</dbReference>
<dbReference type="GO" id="GO:0046677">
    <property type="term" value="P:response to antibiotic"/>
    <property type="evidence" value="ECO:0007669"/>
    <property type="project" value="UniProtKB-UniRule"/>
</dbReference>
<dbReference type="HAMAP" id="MF_01006">
    <property type="entry name" value="Undec_diphosphatase"/>
    <property type="match status" value="1"/>
</dbReference>
<dbReference type="InterPro" id="IPR003824">
    <property type="entry name" value="UppP"/>
</dbReference>
<dbReference type="NCBIfam" id="NF001393">
    <property type="entry name" value="PRK00281.2-4"/>
    <property type="match status" value="1"/>
</dbReference>
<dbReference type="NCBIfam" id="TIGR00753">
    <property type="entry name" value="undec_PP_bacA"/>
    <property type="match status" value="1"/>
</dbReference>
<dbReference type="PANTHER" id="PTHR30622">
    <property type="entry name" value="UNDECAPRENYL-DIPHOSPHATASE"/>
    <property type="match status" value="1"/>
</dbReference>
<dbReference type="PANTHER" id="PTHR30622:SF4">
    <property type="entry name" value="UNDECAPRENYL-DIPHOSPHATASE"/>
    <property type="match status" value="1"/>
</dbReference>
<dbReference type="Pfam" id="PF02673">
    <property type="entry name" value="BacA"/>
    <property type="match status" value="1"/>
</dbReference>
<proteinExistence type="inferred from homology"/>
<accession>A0L9F4</accession>